<reference key="1">
    <citation type="journal article" date="2005" name="PLoS Biol.">
        <title>The Wolbachia genome of Brugia malayi: endosymbiont evolution within a human pathogenic nematode.</title>
        <authorList>
            <person name="Foster J."/>
            <person name="Ganatra M."/>
            <person name="Kamal I."/>
            <person name="Ware J."/>
            <person name="Makarova K."/>
            <person name="Ivanova N."/>
            <person name="Bhattacharyya A."/>
            <person name="Kapatral V."/>
            <person name="Kumar S."/>
            <person name="Posfai J."/>
            <person name="Vincze T."/>
            <person name="Ingram J."/>
            <person name="Moran L."/>
            <person name="Lapidus A."/>
            <person name="Omelchenko M."/>
            <person name="Kyrpides N."/>
            <person name="Ghedin E."/>
            <person name="Wang S."/>
            <person name="Goltsman E."/>
            <person name="Joukov V."/>
            <person name="Ostrovskaya O."/>
            <person name="Tsukerman K."/>
            <person name="Mazur M."/>
            <person name="Comb D."/>
            <person name="Koonin E."/>
            <person name="Slatko B."/>
        </authorList>
    </citation>
    <scope>NUCLEOTIDE SEQUENCE [LARGE SCALE GENOMIC DNA]</scope>
    <source>
        <strain>TRS</strain>
    </source>
</reference>
<evidence type="ECO:0000255" key="1">
    <source>
        <dbReference type="HAMAP-Rule" id="MF_00034"/>
    </source>
</evidence>
<proteinExistence type="inferred from homology"/>
<comment type="function">
    <text evidence="1">The RuvA-RuvB-RuvC complex processes Holliday junction (HJ) DNA during genetic recombination and DNA repair. Endonuclease that resolves HJ intermediates. Cleaves cruciform DNA by making single-stranded nicks across the HJ at symmetrical positions within the homologous arms, yielding a 5'-phosphate and a 3'-hydroxyl group; requires a central core of homology in the junction. The consensus cleavage sequence is 5'-(A/T)TT(C/G)-3'. Cleavage occurs on the 3'-side of the TT dinucleotide at the point of strand exchange. HJ branch migration catalyzed by RuvA-RuvB allows RuvC to scan DNA until it finds its consensus sequence, where it cleaves and resolves the cruciform DNA.</text>
</comment>
<comment type="catalytic activity">
    <reaction evidence="1">
        <text>Endonucleolytic cleavage at a junction such as a reciprocal single-stranded crossover between two homologous DNA duplexes (Holliday junction).</text>
        <dbReference type="EC" id="3.1.21.10"/>
    </reaction>
</comment>
<comment type="cofactor">
    <cofactor evidence="1">
        <name>Mg(2+)</name>
        <dbReference type="ChEBI" id="CHEBI:18420"/>
    </cofactor>
    <text evidence="1">Binds 2 Mg(2+) ion per subunit.</text>
</comment>
<comment type="subunit">
    <text evidence="1">Homodimer which binds Holliday junction (HJ) DNA. The HJ becomes 2-fold symmetrical on binding to RuvC with unstacked arms; it has a different conformation from HJ DNA in complex with RuvA. In the full resolvosome a probable DNA-RuvA(4)-RuvB(12)-RuvC(2) complex forms which resolves the HJ.</text>
</comment>
<comment type="subcellular location">
    <subcellularLocation>
        <location evidence="1">Cytoplasm</location>
    </subcellularLocation>
</comment>
<comment type="similarity">
    <text evidence="1">Belongs to the RuvC family.</text>
</comment>
<sequence>MTRIIGLDPGMSKTGWAIIDMDERSNIEFLGSGTISTGNKLGMGERLHVIFEQLKKVISLYSPSEAAIEKIFVNKNPKSSLTLGYARGIVILVLEITELTMNEYDTNYVKKSITGNGHADKDQVIFMVKQIIKNLNIKCHHAADALAVAICHVYTKSSYFVR</sequence>
<keyword id="KW-0963">Cytoplasm</keyword>
<keyword id="KW-0227">DNA damage</keyword>
<keyword id="KW-0233">DNA recombination</keyword>
<keyword id="KW-0234">DNA repair</keyword>
<keyword id="KW-0238">DNA-binding</keyword>
<keyword id="KW-0255">Endonuclease</keyword>
<keyword id="KW-0378">Hydrolase</keyword>
<keyword id="KW-0460">Magnesium</keyword>
<keyword id="KW-0479">Metal-binding</keyword>
<keyword id="KW-0540">Nuclease</keyword>
<keyword id="KW-1185">Reference proteome</keyword>
<dbReference type="EC" id="3.1.21.10" evidence="1"/>
<dbReference type="EMBL" id="AE017321">
    <property type="protein sequence ID" value="AAW71285.1"/>
    <property type="molecule type" value="Genomic_DNA"/>
</dbReference>
<dbReference type="RefSeq" id="WP_011256894.1">
    <property type="nucleotide sequence ID" value="NC_006833.1"/>
</dbReference>
<dbReference type="SMR" id="Q5GRT9"/>
<dbReference type="STRING" id="292805.Wbm0697"/>
<dbReference type="KEGG" id="wbm:Wbm0697"/>
<dbReference type="eggNOG" id="COG0817">
    <property type="taxonomic scope" value="Bacteria"/>
</dbReference>
<dbReference type="HOGENOM" id="CLU_091257_1_0_5"/>
<dbReference type="Proteomes" id="UP000000534">
    <property type="component" value="Chromosome"/>
</dbReference>
<dbReference type="GO" id="GO:0005737">
    <property type="term" value="C:cytoplasm"/>
    <property type="evidence" value="ECO:0007669"/>
    <property type="project" value="UniProtKB-SubCell"/>
</dbReference>
<dbReference type="GO" id="GO:0048476">
    <property type="term" value="C:Holliday junction resolvase complex"/>
    <property type="evidence" value="ECO:0007669"/>
    <property type="project" value="UniProtKB-UniRule"/>
</dbReference>
<dbReference type="GO" id="GO:0008821">
    <property type="term" value="F:crossover junction DNA endonuclease activity"/>
    <property type="evidence" value="ECO:0007669"/>
    <property type="project" value="UniProtKB-UniRule"/>
</dbReference>
<dbReference type="GO" id="GO:0003677">
    <property type="term" value="F:DNA binding"/>
    <property type="evidence" value="ECO:0007669"/>
    <property type="project" value="UniProtKB-KW"/>
</dbReference>
<dbReference type="GO" id="GO:0000287">
    <property type="term" value="F:magnesium ion binding"/>
    <property type="evidence" value="ECO:0007669"/>
    <property type="project" value="UniProtKB-UniRule"/>
</dbReference>
<dbReference type="GO" id="GO:0006310">
    <property type="term" value="P:DNA recombination"/>
    <property type="evidence" value="ECO:0007669"/>
    <property type="project" value="UniProtKB-UniRule"/>
</dbReference>
<dbReference type="GO" id="GO:0006281">
    <property type="term" value="P:DNA repair"/>
    <property type="evidence" value="ECO:0007669"/>
    <property type="project" value="UniProtKB-UniRule"/>
</dbReference>
<dbReference type="CDD" id="cd16962">
    <property type="entry name" value="RuvC"/>
    <property type="match status" value="1"/>
</dbReference>
<dbReference type="FunFam" id="3.30.420.10:FF:000002">
    <property type="entry name" value="Crossover junction endodeoxyribonuclease RuvC"/>
    <property type="match status" value="1"/>
</dbReference>
<dbReference type="Gene3D" id="3.30.420.10">
    <property type="entry name" value="Ribonuclease H-like superfamily/Ribonuclease H"/>
    <property type="match status" value="1"/>
</dbReference>
<dbReference type="HAMAP" id="MF_00034">
    <property type="entry name" value="RuvC"/>
    <property type="match status" value="1"/>
</dbReference>
<dbReference type="InterPro" id="IPR012337">
    <property type="entry name" value="RNaseH-like_sf"/>
</dbReference>
<dbReference type="InterPro" id="IPR036397">
    <property type="entry name" value="RNaseH_sf"/>
</dbReference>
<dbReference type="InterPro" id="IPR002176">
    <property type="entry name" value="X-over_junc_endoDNase_RuvC"/>
</dbReference>
<dbReference type="NCBIfam" id="TIGR00228">
    <property type="entry name" value="ruvC"/>
    <property type="match status" value="1"/>
</dbReference>
<dbReference type="PANTHER" id="PTHR30194">
    <property type="entry name" value="CROSSOVER JUNCTION ENDODEOXYRIBONUCLEASE RUVC"/>
    <property type="match status" value="1"/>
</dbReference>
<dbReference type="PANTHER" id="PTHR30194:SF3">
    <property type="entry name" value="CROSSOVER JUNCTION ENDODEOXYRIBONUCLEASE RUVC"/>
    <property type="match status" value="1"/>
</dbReference>
<dbReference type="Pfam" id="PF02075">
    <property type="entry name" value="RuvC"/>
    <property type="match status" value="1"/>
</dbReference>
<dbReference type="PRINTS" id="PR00696">
    <property type="entry name" value="RSOLVASERUVC"/>
</dbReference>
<dbReference type="SUPFAM" id="SSF53098">
    <property type="entry name" value="Ribonuclease H-like"/>
    <property type="match status" value="1"/>
</dbReference>
<accession>Q5GRT9</accession>
<feature type="chain" id="PRO_0000225187" description="Crossover junction endodeoxyribonuclease RuvC">
    <location>
        <begin position="1"/>
        <end position="162"/>
    </location>
</feature>
<feature type="active site" evidence="1">
    <location>
        <position position="8"/>
    </location>
</feature>
<feature type="active site" evidence="1">
    <location>
        <position position="69"/>
    </location>
</feature>
<feature type="active site" evidence="1">
    <location>
        <position position="141"/>
    </location>
</feature>
<feature type="binding site" evidence="1">
    <location>
        <position position="8"/>
    </location>
    <ligand>
        <name>Mg(2+)</name>
        <dbReference type="ChEBI" id="CHEBI:18420"/>
        <label>1</label>
    </ligand>
</feature>
<feature type="binding site" evidence="1">
    <location>
        <position position="69"/>
    </location>
    <ligand>
        <name>Mg(2+)</name>
        <dbReference type="ChEBI" id="CHEBI:18420"/>
        <label>2</label>
    </ligand>
</feature>
<feature type="binding site" evidence="1">
    <location>
        <position position="141"/>
    </location>
    <ligand>
        <name>Mg(2+)</name>
        <dbReference type="ChEBI" id="CHEBI:18420"/>
        <label>1</label>
    </ligand>
</feature>
<organism>
    <name type="scientific">Wolbachia sp. subsp. Brugia malayi (strain TRS)</name>
    <dbReference type="NCBI Taxonomy" id="292805"/>
    <lineage>
        <taxon>Bacteria</taxon>
        <taxon>Pseudomonadati</taxon>
        <taxon>Pseudomonadota</taxon>
        <taxon>Alphaproteobacteria</taxon>
        <taxon>Rickettsiales</taxon>
        <taxon>Anaplasmataceae</taxon>
        <taxon>Wolbachieae</taxon>
        <taxon>Wolbachia</taxon>
    </lineage>
</organism>
<protein>
    <recommendedName>
        <fullName evidence="1">Crossover junction endodeoxyribonuclease RuvC</fullName>
        <ecNumber evidence="1">3.1.21.10</ecNumber>
    </recommendedName>
    <alternativeName>
        <fullName evidence="1">Holliday junction nuclease RuvC</fullName>
    </alternativeName>
    <alternativeName>
        <fullName evidence="1">Holliday junction resolvase RuvC</fullName>
    </alternativeName>
</protein>
<name>RUVC_WOLTR</name>
<gene>
    <name evidence="1" type="primary">ruvC</name>
    <name type="ordered locus">Wbm0697</name>
</gene>